<keyword id="KW-0067">ATP-binding</keyword>
<keyword id="KW-0143">Chaperone</keyword>
<keyword id="KW-0175">Coiled coil</keyword>
<keyword id="KW-0547">Nucleotide-binding</keyword>
<keyword id="KW-0647">Proteasome</keyword>
<keyword id="KW-1185">Reference proteome</keyword>
<accession>D0LDS6</accession>
<evidence type="ECO:0000255" key="1">
    <source>
        <dbReference type="HAMAP-Rule" id="MF_02112"/>
    </source>
</evidence>
<evidence type="ECO:0000256" key="2">
    <source>
        <dbReference type="SAM" id="MobiDB-lite"/>
    </source>
</evidence>
<dbReference type="EMBL" id="CP001802">
    <property type="protein sequence ID" value="ACY21699.1"/>
    <property type="molecule type" value="Genomic_DNA"/>
</dbReference>
<dbReference type="RefSeq" id="WP_012834254.1">
    <property type="nucleotide sequence ID" value="NC_013441.1"/>
</dbReference>
<dbReference type="SMR" id="D0LDS6"/>
<dbReference type="STRING" id="526226.Gbro_2458"/>
<dbReference type="KEGG" id="gbr:Gbro_2458"/>
<dbReference type="eggNOG" id="COG1222">
    <property type="taxonomic scope" value="Bacteria"/>
</dbReference>
<dbReference type="HOGENOM" id="CLU_036054_0_0_11"/>
<dbReference type="OrthoDB" id="9809379at2"/>
<dbReference type="UniPathway" id="UPA00997"/>
<dbReference type="Proteomes" id="UP000001219">
    <property type="component" value="Chromosome"/>
</dbReference>
<dbReference type="GO" id="GO:0000502">
    <property type="term" value="C:proteasome complex"/>
    <property type="evidence" value="ECO:0007669"/>
    <property type="project" value="UniProtKB-KW"/>
</dbReference>
<dbReference type="GO" id="GO:0005524">
    <property type="term" value="F:ATP binding"/>
    <property type="evidence" value="ECO:0007669"/>
    <property type="project" value="UniProtKB-UniRule"/>
</dbReference>
<dbReference type="GO" id="GO:0016887">
    <property type="term" value="F:ATP hydrolysis activity"/>
    <property type="evidence" value="ECO:0007669"/>
    <property type="project" value="UniProtKB-UniRule"/>
</dbReference>
<dbReference type="GO" id="GO:0019941">
    <property type="term" value="P:modification-dependent protein catabolic process"/>
    <property type="evidence" value="ECO:0007669"/>
    <property type="project" value="InterPro"/>
</dbReference>
<dbReference type="GO" id="GO:0010498">
    <property type="term" value="P:proteasomal protein catabolic process"/>
    <property type="evidence" value="ECO:0007669"/>
    <property type="project" value="InterPro"/>
</dbReference>
<dbReference type="FunFam" id="2.40.50.140:FF:000169">
    <property type="entry name" value="AAA ATPase forming ring-shaped complexes"/>
    <property type="match status" value="1"/>
</dbReference>
<dbReference type="FunFam" id="3.40.50.300:FF:000155">
    <property type="entry name" value="AAA ATPase forming ring-shaped complexes"/>
    <property type="match status" value="1"/>
</dbReference>
<dbReference type="Gene3D" id="1.10.8.60">
    <property type="match status" value="1"/>
</dbReference>
<dbReference type="Gene3D" id="1.20.5.170">
    <property type="match status" value="1"/>
</dbReference>
<dbReference type="Gene3D" id="2.40.50.140">
    <property type="entry name" value="Nucleic acid-binding proteins"/>
    <property type="match status" value="2"/>
</dbReference>
<dbReference type="Gene3D" id="3.40.50.300">
    <property type="entry name" value="P-loop containing nucleotide triphosphate hydrolases"/>
    <property type="match status" value="1"/>
</dbReference>
<dbReference type="HAMAP" id="MF_02112">
    <property type="entry name" value="ARC_ATPase"/>
    <property type="match status" value="1"/>
</dbReference>
<dbReference type="InterPro" id="IPR003593">
    <property type="entry name" value="AAA+_ATPase"/>
</dbReference>
<dbReference type="InterPro" id="IPR050168">
    <property type="entry name" value="AAA_ATPase_domain"/>
</dbReference>
<dbReference type="InterPro" id="IPR003959">
    <property type="entry name" value="ATPase_AAA_core"/>
</dbReference>
<dbReference type="InterPro" id="IPR003960">
    <property type="entry name" value="ATPase_AAA_CS"/>
</dbReference>
<dbReference type="InterPro" id="IPR012340">
    <property type="entry name" value="NA-bd_OB-fold"/>
</dbReference>
<dbReference type="InterPro" id="IPR027417">
    <property type="entry name" value="P-loop_NTPase"/>
</dbReference>
<dbReference type="InterPro" id="IPR032501">
    <property type="entry name" value="Prot_ATP_ID_OB_2nd"/>
</dbReference>
<dbReference type="InterPro" id="IPR041626">
    <property type="entry name" value="Prot_ATP_ID_OB_N"/>
</dbReference>
<dbReference type="InterPro" id="IPR022482">
    <property type="entry name" value="Proteasome_ATPase"/>
</dbReference>
<dbReference type="NCBIfam" id="TIGR03689">
    <property type="entry name" value="pup_AAA"/>
    <property type="match status" value="1"/>
</dbReference>
<dbReference type="PANTHER" id="PTHR23077">
    <property type="entry name" value="AAA-FAMILY ATPASE"/>
    <property type="match status" value="1"/>
</dbReference>
<dbReference type="PANTHER" id="PTHR23077:SF144">
    <property type="entry name" value="PROTEASOME-ASSOCIATED ATPASE"/>
    <property type="match status" value="1"/>
</dbReference>
<dbReference type="Pfam" id="PF00004">
    <property type="entry name" value="AAA"/>
    <property type="match status" value="1"/>
</dbReference>
<dbReference type="Pfam" id="PF16450">
    <property type="entry name" value="Prot_ATP_ID_OB_C"/>
    <property type="match status" value="1"/>
</dbReference>
<dbReference type="Pfam" id="PF17758">
    <property type="entry name" value="Prot_ATP_ID_OB_N"/>
    <property type="match status" value="1"/>
</dbReference>
<dbReference type="SMART" id="SM00382">
    <property type="entry name" value="AAA"/>
    <property type="match status" value="1"/>
</dbReference>
<dbReference type="SUPFAM" id="SSF52540">
    <property type="entry name" value="P-loop containing nucleoside triphosphate hydrolases"/>
    <property type="match status" value="1"/>
</dbReference>
<dbReference type="PROSITE" id="PS00674">
    <property type="entry name" value="AAA"/>
    <property type="match status" value="1"/>
</dbReference>
<reference key="1">
    <citation type="submission" date="2009-10" db="EMBL/GenBank/DDBJ databases">
        <title>The complete chromosome of Gordonia bronchialis DSM 43247.</title>
        <authorList>
            <consortium name="US DOE Joint Genome Institute (JGI-PGF)"/>
            <person name="Lucas S."/>
            <person name="Copeland A."/>
            <person name="Lapidus A."/>
            <person name="Glavina del Rio T."/>
            <person name="Dalin E."/>
            <person name="Tice H."/>
            <person name="Bruce D."/>
            <person name="Goodwin L."/>
            <person name="Pitluck S."/>
            <person name="Kyrpides N."/>
            <person name="Mavromatis K."/>
            <person name="Ivanova N."/>
            <person name="Ovchinnikova G."/>
            <person name="Saunders E."/>
            <person name="Brettin T."/>
            <person name="Detter J.C."/>
            <person name="Han C."/>
            <person name="Larimer F."/>
            <person name="Land M."/>
            <person name="Hauser L."/>
            <person name="Markowitz V."/>
            <person name="Cheng J.-F."/>
            <person name="Hugenholtz P."/>
            <person name="Woyke T."/>
            <person name="Wu D."/>
            <person name="Jando M."/>
            <person name="Schneider S."/>
            <person name="Goeker M."/>
            <person name="Klenk H.-P."/>
            <person name="Eisen J.A."/>
        </authorList>
    </citation>
    <scope>NUCLEOTIDE SEQUENCE [LARGE SCALE GENOMIC DNA]</scope>
    <source>
        <strain>ATCC 25592 / DSM 43247 / BCRC 13721 / JCM 3198 / KCTC 3076 / NBRC 16047 / NCTC 10667</strain>
    </source>
</reference>
<comment type="function">
    <text evidence="1">ATPase which is responsible for recognizing, binding, unfolding and translocation of pupylated proteins into the bacterial 20S proteasome core particle. May be essential for opening the gate of the 20S proteasome via an interaction with its C-terminus, thereby allowing substrate entry and access to the site of proteolysis. Thus, the C-termini of the proteasomal ATPase may function like a 'key in a lock' to induce gate opening and therefore regulate proteolysis.</text>
</comment>
<comment type="pathway">
    <text evidence="1">Protein degradation; proteasomal Pup-dependent pathway.</text>
</comment>
<comment type="subunit">
    <text evidence="1">Homohexamer. Assembles into a hexameric ring structure that caps the 20S proteasome core. Strongly interacts with the prokaryotic ubiquitin-like protein Pup through a hydrophobic interface; the interacting region of ARC lies in its N-terminal coiled-coil domain. There is one Pup binding site per ARC hexamer ring. Upon ATP-binding, the C-terminus of ARC interacts with the alpha-rings of the proteasome core, possibly by binding to the intersubunit pockets.</text>
</comment>
<comment type="domain">
    <text evidence="1">Consists of three main regions, an N-terminal coiled-coil domain that binds to protein Pup and functions as a docking station, an interdomain involved in ARC hexamerization, and a C-terminal ATPase domain of the AAA type.</text>
</comment>
<comment type="similarity">
    <text evidence="1">Belongs to the AAA ATPase family.</text>
</comment>
<proteinExistence type="inferred from homology"/>
<organism>
    <name type="scientific">Gordonia bronchialis (strain ATCC 25592 / DSM 43247 / BCRC 13721 / JCM 3198 / KCTC 3076 / NBRC 16047 / NCTC 10667)</name>
    <name type="common">Rhodococcus bronchialis</name>
    <dbReference type="NCBI Taxonomy" id="526226"/>
    <lineage>
        <taxon>Bacteria</taxon>
        <taxon>Bacillati</taxon>
        <taxon>Actinomycetota</taxon>
        <taxon>Actinomycetes</taxon>
        <taxon>Mycobacteriales</taxon>
        <taxon>Gordoniaceae</taxon>
        <taxon>Gordonia</taxon>
    </lineage>
</organism>
<sequence length="607" mass="67157">MTESDRHDTPKGDRRISEGAGASPDESNPTDFAPEEFTPAYTPPLARSGTERPSFGRPAADNKELQERVDNLTARNAKLLDTLKDARQQLVALREEVDRLGQPPSGYGVLLEVQPDATVDVFTSGRKMRLTCSPNIDTETLHKGQTLRLNEALTIVEACEFDTVGEISTLREVLGDGKRALVVGHADEERVVHLAEPLLGEVDGEDGKRRRLRPGDSLLIDTKAGFAFERVPKAEVEDLVLEEVPDVGYEDIGGLGRQIEQIRDAVELPFLHKDLFRDYALRPPKGVLLYGPPGCGKTLIAKAVANSLAKKIAQARGDDAKEAKSYFLNIKGPELLNKFVGETERHIRLIFQRAREKASEGTPVIVFFDEMDSIFRTRGSGVSSDVETTVVPQLLSEIDGVEGLENVIVIGASNREDMIDPAILRPGRLDVKIKIERPDAEAAMDIFSKYLVETLPVHADDLNEFGGDRTACINAMIERVVERMYAESDDNRFLEVTYANGDKEIMYFKDFNSGAMIQNVVDRSKKYAIKSQLETGAPGLRVQHLFDSILDEFAENEDLPNTTNPDDWARISGKKGERIVYIRTLVTGKSSGASRAIDTETNTGQYL</sequence>
<protein>
    <recommendedName>
        <fullName evidence="1">Proteasome-associated ATPase</fullName>
    </recommendedName>
    <alternativeName>
        <fullName evidence="1">AAA ATPase forming ring-shaped complexes</fullName>
        <shortName evidence="1">ARC</shortName>
    </alternativeName>
    <alternativeName>
        <fullName evidence="1">Proteasomal ATPase</fullName>
    </alternativeName>
</protein>
<feature type="chain" id="PRO_0000396986" description="Proteasome-associated ATPase">
    <location>
        <begin position="1"/>
        <end position="607"/>
    </location>
</feature>
<feature type="region of interest" description="Disordered" evidence="2">
    <location>
        <begin position="1"/>
        <end position="65"/>
    </location>
</feature>
<feature type="region of interest" description="Docks into pockets in the proteasome alpha-ring" evidence="1">
    <location>
        <begin position="606"/>
        <end position="607"/>
    </location>
</feature>
<feature type="coiled-coil region" evidence="1">
    <location>
        <begin position="59"/>
        <end position="102"/>
    </location>
</feature>
<feature type="compositionally biased region" description="Basic and acidic residues" evidence="2">
    <location>
        <begin position="1"/>
        <end position="17"/>
    </location>
</feature>
<feature type="binding site" evidence="1">
    <location>
        <begin position="294"/>
        <end position="299"/>
    </location>
    <ligand>
        <name>ATP</name>
        <dbReference type="ChEBI" id="CHEBI:30616"/>
    </ligand>
</feature>
<gene>
    <name evidence="1" type="primary">arc</name>
    <name type="ordered locus">Gbro_2458</name>
</gene>
<name>ARC_GORB4</name>